<organism>
    <name type="scientific">Scolopendra mutilans</name>
    <name type="common">Chinese red-headed centipede</name>
    <name type="synonym">Scolopendra subspinipes mutilans</name>
    <dbReference type="NCBI Taxonomy" id="2836329"/>
    <lineage>
        <taxon>Eukaryota</taxon>
        <taxon>Metazoa</taxon>
        <taxon>Ecdysozoa</taxon>
        <taxon>Arthropoda</taxon>
        <taxon>Myriapoda</taxon>
        <taxon>Chilopoda</taxon>
        <taxon>Pleurostigmophora</taxon>
        <taxon>Scolopendromorpha</taxon>
        <taxon>Scolopendridae</taxon>
        <taxon>Scolopendra</taxon>
    </lineage>
</organism>
<keyword id="KW-0903">Direct protein sequencing</keyword>
<keyword id="KW-1015">Disulfide bond</keyword>
<keyword id="KW-0528">Neurotoxin</keyword>
<keyword id="KW-0964">Secreted</keyword>
<keyword id="KW-0732">Signal</keyword>
<keyword id="KW-0800">Toxin</keyword>
<accession>P0DMD3</accession>
<evidence type="ECO:0000269" key="1">
    <source>
    </source>
</evidence>
<evidence type="ECO:0000303" key="2">
    <source>
    </source>
</evidence>
<evidence type="ECO:0000305" key="3"/>
<evidence type="ECO:0000305" key="4">
    <source>
    </source>
</evidence>
<dbReference type="SMR" id="P0DMD3"/>
<dbReference type="GO" id="GO:0005576">
    <property type="term" value="C:extracellular region"/>
    <property type="evidence" value="ECO:0007669"/>
    <property type="project" value="UniProtKB-SubCell"/>
</dbReference>
<dbReference type="GO" id="GO:0090729">
    <property type="term" value="F:toxin activity"/>
    <property type="evidence" value="ECO:0007669"/>
    <property type="project" value="UniProtKB-KW"/>
</dbReference>
<reference key="1">
    <citation type="journal article" date="2012" name="Mol. Cell. Proteomics">
        <title>Chemical punch packed in venoms makes centipedes excellent predators.</title>
        <authorList>
            <person name="Yang S."/>
            <person name="Liu Z."/>
            <person name="Xiao Y."/>
            <person name="Li Y."/>
            <person name="Rong M."/>
            <person name="Liang S."/>
            <person name="Zhang Z."/>
            <person name="Yu H."/>
            <person name="King G.F."/>
            <person name="Lai R."/>
        </authorList>
    </citation>
    <scope>NUCLEOTIDE SEQUENCE [MRNA]</scope>
    <scope>PROTEIN SEQUENCE OF 22-62</scope>
    <scope>SUBCELLULAR LOCATION</scope>
    <source>
        <tissue>Venom</tissue>
        <tissue>Venom gland</tissue>
    </source>
</reference>
<name>PNXA9_SCOMU</name>
<comment type="subcellular location">
    <subcellularLocation>
        <location evidence="1">Secreted</location>
    </subcellularLocation>
</comment>
<comment type="tissue specificity">
    <text evidence="4">Expressed by the venom gland.</text>
</comment>
<comment type="PTM">
    <text evidence="3">Contains 3 disulfide bonds.</text>
</comment>
<comment type="similarity">
    <text evidence="3">Belongs to the scolopendra neurotoxin 10 family.</text>
</comment>
<feature type="signal peptide" evidence="1">
    <location>
        <begin position="1"/>
        <end position="21"/>
    </location>
</feature>
<feature type="chain" id="PRO_0000425496" description="Putative neurotoxin 9" evidence="4">
    <location>
        <begin position="22"/>
        <end position="105"/>
    </location>
</feature>
<proteinExistence type="evidence at protein level"/>
<sequence length="105" mass="12483">MTVSCSKVLLSLCLFLMLLKATHESNQQRTNFREFFEIQLAQETREINEKNNQPLNQQLPQLNRRKRLWRDEDRRTFCTTLCPCEDRRKRAAVTPPTRKVPCCCP</sequence>
<protein>
    <recommendedName>
        <fullName evidence="2">Putative neurotoxin 9</fullName>
    </recommendedName>
</protein>